<sequence length="424" mass="46478">MTDFGHDVWWLVVAKAIAIFVFLMLTVLVAILAERKLLGRMQLRPGPNRVGPKGSLQSLADGIKLALKESITPGGIDRFVYFVAPIISVIPAFTAFAFIPFGPVVSVFGHRTPLQLTDLPVAVLFILGLSAIGVYGIVLGGWASGSTYPLLGGVRSTAQVISYEVAMGLSFAAVFLYAGSMSTSQIIAAQDRVWYIFLLLPSFVIYLISMVGETNRAPFDLPEAEGELVAGFHTEYSSLKFAMFMLAEYVNMTTVSALAATLFLGGWHAPWPLNLWHGANAGWWPVLWFTAKVWGFLFMYFWLRATLPRLRYDQFMALGWKLLIPVSLVWVLIAAVIRTLRNQGYQYWTPALVVSSIVVAAILVMSLRKPFSTPNAVTKARRRGKQPAAGPDEQGALEPLFPTPPLPMKPLAQPVGASKENARG</sequence>
<accession>A0PR45</accession>
<gene>
    <name evidence="1" type="primary">nuoH</name>
    <name type="ordered locus">MUL_2466</name>
</gene>
<reference key="1">
    <citation type="journal article" date="2007" name="Genome Res.">
        <title>Reductive evolution and niche adaptation inferred from the genome of Mycobacterium ulcerans, the causative agent of Buruli ulcer.</title>
        <authorList>
            <person name="Stinear T.P."/>
            <person name="Seemann T."/>
            <person name="Pidot S."/>
            <person name="Frigui W."/>
            <person name="Reysset G."/>
            <person name="Garnier T."/>
            <person name="Meurice G."/>
            <person name="Simon D."/>
            <person name="Bouchier C."/>
            <person name="Ma L."/>
            <person name="Tichit M."/>
            <person name="Porter J.L."/>
            <person name="Ryan J."/>
            <person name="Johnson P.D.R."/>
            <person name="Davies J.K."/>
            <person name="Jenkin G.A."/>
            <person name="Small P.L.C."/>
            <person name="Jones L.M."/>
            <person name="Tekaia F."/>
            <person name="Laval F."/>
            <person name="Daffe M."/>
            <person name="Parkhill J."/>
            <person name="Cole S.T."/>
        </authorList>
    </citation>
    <scope>NUCLEOTIDE SEQUENCE [LARGE SCALE GENOMIC DNA]</scope>
    <source>
        <strain>Agy99</strain>
    </source>
</reference>
<name>NUOH_MYCUA</name>
<dbReference type="EC" id="7.1.1.-" evidence="1"/>
<dbReference type="EMBL" id="CP000325">
    <property type="protein sequence ID" value="ABL04814.1"/>
    <property type="molecule type" value="Genomic_DNA"/>
</dbReference>
<dbReference type="RefSeq" id="WP_011740429.1">
    <property type="nucleotide sequence ID" value="NC_008611.1"/>
</dbReference>
<dbReference type="SMR" id="A0PR45"/>
<dbReference type="GeneID" id="93436053"/>
<dbReference type="KEGG" id="mul:MUL_2466"/>
<dbReference type="eggNOG" id="COG1005">
    <property type="taxonomic scope" value="Bacteria"/>
</dbReference>
<dbReference type="HOGENOM" id="CLU_015134_0_0_11"/>
<dbReference type="Proteomes" id="UP000000765">
    <property type="component" value="Chromosome"/>
</dbReference>
<dbReference type="GO" id="GO:0005886">
    <property type="term" value="C:plasma membrane"/>
    <property type="evidence" value="ECO:0007669"/>
    <property type="project" value="UniProtKB-SubCell"/>
</dbReference>
<dbReference type="GO" id="GO:0003954">
    <property type="term" value="F:NADH dehydrogenase activity"/>
    <property type="evidence" value="ECO:0007669"/>
    <property type="project" value="TreeGrafter"/>
</dbReference>
<dbReference type="GO" id="GO:0016655">
    <property type="term" value="F:oxidoreductase activity, acting on NAD(P)H, quinone or similar compound as acceptor"/>
    <property type="evidence" value="ECO:0007669"/>
    <property type="project" value="UniProtKB-UniRule"/>
</dbReference>
<dbReference type="GO" id="GO:0048038">
    <property type="term" value="F:quinone binding"/>
    <property type="evidence" value="ECO:0007669"/>
    <property type="project" value="UniProtKB-KW"/>
</dbReference>
<dbReference type="GO" id="GO:0009060">
    <property type="term" value="P:aerobic respiration"/>
    <property type="evidence" value="ECO:0007669"/>
    <property type="project" value="TreeGrafter"/>
</dbReference>
<dbReference type="HAMAP" id="MF_01350">
    <property type="entry name" value="NDH1_NuoH"/>
    <property type="match status" value="1"/>
</dbReference>
<dbReference type="InterPro" id="IPR001694">
    <property type="entry name" value="NADH_UbQ_OxRdtase_su1/FPO"/>
</dbReference>
<dbReference type="InterPro" id="IPR018086">
    <property type="entry name" value="NADH_UbQ_OxRdtase_su1_CS"/>
</dbReference>
<dbReference type="NCBIfam" id="NF004741">
    <property type="entry name" value="PRK06076.1-2"/>
    <property type="match status" value="1"/>
</dbReference>
<dbReference type="NCBIfam" id="NF004743">
    <property type="entry name" value="PRK06076.1-4"/>
    <property type="match status" value="1"/>
</dbReference>
<dbReference type="PANTHER" id="PTHR11432">
    <property type="entry name" value="NADH DEHYDROGENASE SUBUNIT 1"/>
    <property type="match status" value="1"/>
</dbReference>
<dbReference type="PANTHER" id="PTHR11432:SF3">
    <property type="entry name" value="NADH-UBIQUINONE OXIDOREDUCTASE CHAIN 1"/>
    <property type="match status" value="1"/>
</dbReference>
<dbReference type="Pfam" id="PF00146">
    <property type="entry name" value="NADHdh"/>
    <property type="match status" value="1"/>
</dbReference>
<dbReference type="PROSITE" id="PS00667">
    <property type="entry name" value="COMPLEX1_ND1_1"/>
    <property type="match status" value="1"/>
</dbReference>
<dbReference type="PROSITE" id="PS00668">
    <property type="entry name" value="COMPLEX1_ND1_2"/>
    <property type="match status" value="1"/>
</dbReference>
<comment type="function">
    <text evidence="1">NDH-1 shuttles electrons from NADH, via FMN and iron-sulfur (Fe-S) centers, to quinones in the respiratory chain. The immediate electron acceptor for the enzyme in this species is believed to be menaquinone. Couples the redox reaction to proton translocation (for every two electrons transferred, four hydrogen ions are translocated across the cytoplasmic membrane), and thus conserves the redox energy in a proton gradient. This subunit may bind ubiquinone (By similarity).</text>
</comment>
<comment type="catalytic activity">
    <reaction evidence="1">
        <text>a quinone + NADH + 5 H(+)(in) = a quinol + NAD(+) + 4 H(+)(out)</text>
        <dbReference type="Rhea" id="RHEA:57888"/>
        <dbReference type="ChEBI" id="CHEBI:15378"/>
        <dbReference type="ChEBI" id="CHEBI:24646"/>
        <dbReference type="ChEBI" id="CHEBI:57540"/>
        <dbReference type="ChEBI" id="CHEBI:57945"/>
        <dbReference type="ChEBI" id="CHEBI:132124"/>
    </reaction>
</comment>
<comment type="subunit">
    <text evidence="1">NDH-1 is composed of 14 different subunits. Subunits NuoA, H, J, K, L, M, N constitute the membrane sector of the complex.</text>
</comment>
<comment type="subcellular location">
    <subcellularLocation>
        <location evidence="1">Cell membrane</location>
        <topology evidence="1">Multi-pass membrane protein</topology>
    </subcellularLocation>
</comment>
<comment type="similarity">
    <text evidence="1">Belongs to the complex I subunit 1 family.</text>
</comment>
<proteinExistence type="inferred from homology"/>
<organism>
    <name type="scientific">Mycobacterium ulcerans (strain Agy99)</name>
    <dbReference type="NCBI Taxonomy" id="362242"/>
    <lineage>
        <taxon>Bacteria</taxon>
        <taxon>Bacillati</taxon>
        <taxon>Actinomycetota</taxon>
        <taxon>Actinomycetes</taxon>
        <taxon>Mycobacteriales</taxon>
        <taxon>Mycobacteriaceae</taxon>
        <taxon>Mycobacterium</taxon>
        <taxon>Mycobacterium ulcerans group</taxon>
    </lineage>
</organism>
<evidence type="ECO:0000255" key="1">
    <source>
        <dbReference type="HAMAP-Rule" id="MF_01350"/>
    </source>
</evidence>
<evidence type="ECO:0000256" key="2">
    <source>
        <dbReference type="SAM" id="MobiDB-lite"/>
    </source>
</evidence>
<protein>
    <recommendedName>
        <fullName evidence="1">NADH-quinone oxidoreductase subunit H</fullName>
        <ecNumber evidence="1">7.1.1.-</ecNumber>
    </recommendedName>
    <alternativeName>
        <fullName evidence="1">NADH dehydrogenase I subunit H</fullName>
    </alternativeName>
    <alternativeName>
        <fullName evidence="1">NDH-1 subunit H</fullName>
    </alternativeName>
</protein>
<keyword id="KW-1003">Cell membrane</keyword>
<keyword id="KW-0472">Membrane</keyword>
<keyword id="KW-0520">NAD</keyword>
<keyword id="KW-0874">Quinone</keyword>
<keyword id="KW-1278">Translocase</keyword>
<keyword id="KW-0812">Transmembrane</keyword>
<keyword id="KW-1133">Transmembrane helix</keyword>
<feature type="chain" id="PRO_0000298829" description="NADH-quinone oxidoreductase subunit H">
    <location>
        <begin position="1"/>
        <end position="424"/>
    </location>
</feature>
<feature type="transmembrane region" description="Helical" evidence="1">
    <location>
        <begin position="11"/>
        <end position="31"/>
    </location>
</feature>
<feature type="transmembrane region" description="Helical" evidence="1">
    <location>
        <begin position="79"/>
        <end position="99"/>
    </location>
</feature>
<feature type="transmembrane region" description="Helical" evidence="1">
    <location>
        <begin position="119"/>
        <end position="139"/>
    </location>
</feature>
<feature type="transmembrane region" description="Helical" evidence="1">
    <location>
        <begin position="160"/>
        <end position="180"/>
    </location>
</feature>
<feature type="transmembrane region" description="Helical" evidence="1">
    <location>
        <begin position="193"/>
        <end position="213"/>
    </location>
</feature>
<feature type="transmembrane region" description="Helical" evidence="1">
    <location>
        <begin position="255"/>
        <end position="275"/>
    </location>
</feature>
<feature type="transmembrane region" description="Helical" evidence="1">
    <location>
        <begin position="283"/>
        <end position="303"/>
    </location>
</feature>
<feature type="transmembrane region" description="Helical" evidence="1">
    <location>
        <begin position="317"/>
        <end position="337"/>
    </location>
</feature>
<feature type="transmembrane region" description="Helical" evidence="1">
    <location>
        <begin position="347"/>
        <end position="367"/>
    </location>
</feature>
<feature type="region of interest" description="Disordered" evidence="2">
    <location>
        <begin position="376"/>
        <end position="424"/>
    </location>
</feature>